<keyword id="KW-1185">Reference proteome</keyword>
<keyword id="KW-0678">Repressor</keyword>
<keyword id="KW-0687">Ribonucleoprotein</keyword>
<keyword id="KW-0689">Ribosomal protein</keyword>
<keyword id="KW-0694">RNA-binding</keyword>
<keyword id="KW-0699">rRNA-binding</keyword>
<keyword id="KW-0810">Translation regulation</keyword>
<keyword id="KW-0820">tRNA-binding</keyword>
<reference key="1">
    <citation type="journal article" date="2007" name="J. Bacteriol.">
        <title>Genome of the opportunistic pathogen Streptococcus sanguinis.</title>
        <authorList>
            <person name="Xu P."/>
            <person name="Alves J.M."/>
            <person name="Kitten T."/>
            <person name="Brown A."/>
            <person name="Chen Z."/>
            <person name="Ozaki L.S."/>
            <person name="Manque P."/>
            <person name="Ge X."/>
            <person name="Serrano M.G."/>
            <person name="Puiu D."/>
            <person name="Hendricks S."/>
            <person name="Wang Y."/>
            <person name="Chaplin M.D."/>
            <person name="Akan D."/>
            <person name="Paik S."/>
            <person name="Peterson D.L."/>
            <person name="Macrina F.L."/>
            <person name="Buck G.A."/>
        </authorList>
    </citation>
    <scope>NUCLEOTIDE SEQUENCE [LARGE SCALE GENOMIC DNA]</scope>
    <source>
        <strain>SK36</strain>
    </source>
</reference>
<sequence>MAKKSKQLRAALEKIDSTKAYSVEEAVALAKETNFAKFDATVEVAYNLNIDVKKADQQIRGAMVLPNGTGKTSRVLVFARGAKAEEAKAAGADFVGEDDLVAKINDGWLDFDVVIATPDMMALVGRLGRVLGPRNLMPNPKTGTVTMDVAKAVEESKGGKITYRADRAGNVQAIIGKVSFEADKLVENFKAFNDTIQKAKPATAKGTYVTNLTITTTQGVGIKVDVNSL</sequence>
<organism>
    <name type="scientific">Streptococcus sanguinis (strain SK36)</name>
    <dbReference type="NCBI Taxonomy" id="388919"/>
    <lineage>
        <taxon>Bacteria</taxon>
        <taxon>Bacillati</taxon>
        <taxon>Bacillota</taxon>
        <taxon>Bacilli</taxon>
        <taxon>Lactobacillales</taxon>
        <taxon>Streptococcaceae</taxon>
        <taxon>Streptococcus</taxon>
    </lineage>
</organism>
<gene>
    <name evidence="1" type="primary">rplA</name>
    <name type="ordered locus">SSA_1622</name>
</gene>
<name>RL1_STRSV</name>
<comment type="function">
    <text evidence="1">Binds directly to 23S rRNA. The L1 stalk is quite mobile in the ribosome, and is involved in E site tRNA release.</text>
</comment>
<comment type="function">
    <text evidence="1">Protein L1 is also a translational repressor protein, it controls the translation of the L11 operon by binding to its mRNA.</text>
</comment>
<comment type="subunit">
    <text evidence="1">Part of the 50S ribosomal subunit.</text>
</comment>
<comment type="similarity">
    <text evidence="1">Belongs to the universal ribosomal protein uL1 family.</text>
</comment>
<feature type="chain" id="PRO_0000308119" description="Large ribosomal subunit protein uL1">
    <location>
        <begin position="1"/>
        <end position="229"/>
    </location>
</feature>
<accession>A3CPA5</accession>
<evidence type="ECO:0000255" key="1">
    <source>
        <dbReference type="HAMAP-Rule" id="MF_01318"/>
    </source>
</evidence>
<evidence type="ECO:0000305" key="2"/>
<proteinExistence type="inferred from homology"/>
<protein>
    <recommendedName>
        <fullName evidence="1">Large ribosomal subunit protein uL1</fullName>
    </recommendedName>
    <alternativeName>
        <fullName evidence="2">50S ribosomal protein L1</fullName>
    </alternativeName>
</protein>
<dbReference type="EMBL" id="CP000387">
    <property type="protein sequence ID" value="ABN45010.1"/>
    <property type="molecule type" value="Genomic_DNA"/>
</dbReference>
<dbReference type="RefSeq" id="WP_002894855.1">
    <property type="nucleotide sequence ID" value="NZ_CAXTYR010000001.1"/>
</dbReference>
<dbReference type="RefSeq" id="YP_001035560.1">
    <property type="nucleotide sequence ID" value="NC_009009.1"/>
</dbReference>
<dbReference type="SMR" id="A3CPA5"/>
<dbReference type="STRING" id="388919.SSA_1622"/>
<dbReference type="GeneID" id="48425988"/>
<dbReference type="KEGG" id="ssa:SSA_1622"/>
<dbReference type="PATRIC" id="fig|388919.9.peg.1540"/>
<dbReference type="eggNOG" id="COG0081">
    <property type="taxonomic scope" value="Bacteria"/>
</dbReference>
<dbReference type="HOGENOM" id="CLU_062853_0_0_9"/>
<dbReference type="OrthoDB" id="9803740at2"/>
<dbReference type="Proteomes" id="UP000002148">
    <property type="component" value="Chromosome"/>
</dbReference>
<dbReference type="GO" id="GO:0015934">
    <property type="term" value="C:large ribosomal subunit"/>
    <property type="evidence" value="ECO:0007669"/>
    <property type="project" value="InterPro"/>
</dbReference>
<dbReference type="GO" id="GO:0019843">
    <property type="term" value="F:rRNA binding"/>
    <property type="evidence" value="ECO:0007669"/>
    <property type="project" value="UniProtKB-UniRule"/>
</dbReference>
<dbReference type="GO" id="GO:0003735">
    <property type="term" value="F:structural constituent of ribosome"/>
    <property type="evidence" value="ECO:0007669"/>
    <property type="project" value="InterPro"/>
</dbReference>
<dbReference type="GO" id="GO:0000049">
    <property type="term" value="F:tRNA binding"/>
    <property type="evidence" value="ECO:0007669"/>
    <property type="project" value="UniProtKB-KW"/>
</dbReference>
<dbReference type="GO" id="GO:0006417">
    <property type="term" value="P:regulation of translation"/>
    <property type="evidence" value="ECO:0007669"/>
    <property type="project" value="UniProtKB-KW"/>
</dbReference>
<dbReference type="GO" id="GO:0006412">
    <property type="term" value="P:translation"/>
    <property type="evidence" value="ECO:0007669"/>
    <property type="project" value="UniProtKB-UniRule"/>
</dbReference>
<dbReference type="CDD" id="cd00403">
    <property type="entry name" value="Ribosomal_L1"/>
    <property type="match status" value="1"/>
</dbReference>
<dbReference type="FunFam" id="3.40.50.790:FF:000001">
    <property type="entry name" value="50S ribosomal protein L1"/>
    <property type="match status" value="1"/>
</dbReference>
<dbReference type="Gene3D" id="3.30.190.20">
    <property type="match status" value="1"/>
</dbReference>
<dbReference type="Gene3D" id="3.40.50.790">
    <property type="match status" value="1"/>
</dbReference>
<dbReference type="HAMAP" id="MF_01318_B">
    <property type="entry name" value="Ribosomal_uL1_B"/>
    <property type="match status" value="1"/>
</dbReference>
<dbReference type="InterPro" id="IPR005878">
    <property type="entry name" value="Ribosom_uL1_bac-type"/>
</dbReference>
<dbReference type="InterPro" id="IPR002143">
    <property type="entry name" value="Ribosomal_uL1"/>
</dbReference>
<dbReference type="InterPro" id="IPR023674">
    <property type="entry name" value="Ribosomal_uL1-like"/>
</dbReference>
<dbReference type="InterPro" id="IPR028364">
    <property type="entry name" value="Ribosomal_uL1/biogenesis"/>
</dbReference>
<dbReference type="InterPro" id="IPR016095">
    <property type="entry name" value="Ribosomal_uL1_3-a/b-sand"/>
</dbReference>
<dbReference type="InterPro" id="IPR023673">
    <property type="entry name" value="Ribosomal_uL1_CS"/>
</dbReference>
<dbReference type="NCBIfam" id="TIGR01169">
    <property type="entry name" value="rplA_bact"/>
    <property type="match status" value="1"/>
</dbReference>
<dbReference type="PANTHER" id="PTHR36427">
    <property type="entry name" value="54S RIBOSOMAL PROTEIN L1, MITOCHONDRIAL"/>
    <property type="match status" value="1"/>
</dbReference>
<dbReference type="PANTHER" id="PTHR36427:SF3">
    <property type="entry name" value="LARGE RIBOSOMAL SUBUNIT PROTEIN UL1M"/>
    <property type="match status" value="1"/>
</dbReference>
<dbReference type="Pfam" id="PF00687">
    <property type="entry name" value="Ribosomal_L1"/>
    <property type="match status" value="1"/>
</dbReference>
<dbReference type="PIRSF" id="PIRSF002155">
    <property type="entry name" value="Ribosomal_L1"/>
    <property type="match status" value="1"/>
</dbReference>
<dbReference type="SUPFAM" id="SSF56808">
    <property type="entry name" value="Ribosomal protein L1"/>
    <property type="match status" value="1"/>
</dbReference>
<dbReference type="PROSITE" id="PS01199">
    <property type="entry name" value="RIBOSOMAL_L1"/>
    <property type="match status" value="1"/>
</dbReference>